<accession>Q2R2W1</accession>
<accession>Q0IS84</accession>
<protein>
    <recommendedName>
        <fullName>Adagio-like protein 3</fullName>
    </recommendedName>
</protein>
<comment type="function">
    <text evidence="1">Component of an E3 ubiquitin ligase complex that plays a central role in blue light-dependent circadian cycles. Acts as a blue light photoreceptor, due to the presence of FMN, that mediates light-regulated protein degradation of critical clock components by targeting them to the proteasome complex. The SCF(ADO3) E3 ubiquitin ligase complex is involved in the regulation of circadian clock-dependent processes including transition to flowering time, hypocotyl elongation, cotyledons and leaf movement rhythms (By similarity).</text>
</comment>
<comment type="pathway">
    <text>Protein modification; protein ubiquitination.</text>
</comment>
<comment type="subcellular location">
    <subcellularLocation>
        <location evidence="1">Nucleus</location>
    </subcellularLocation>
</comment>
<comment type="PTM">
    <text evidence="1">FMN binds covalently to cysteine after exposure to blue light and is reversed in the dark.</text>
</comment>
<comment type="miscellaneous">
    <text>'Adagio' means slowly in Italian.</text>
</comment>
<comment type="similarity">
    <text evidence="3">Belongs to the ADAGIO family.</text>
</comment>
<feature type="chain" id="PRO_0000247312" description="Adagio-like protein 3">
    <location>
        <begin position="1"/>
        <end position="630"/>
    </location>
</feature>
<feature type="domain" description="PAS" evidence="2">
    <location>
        <begin position="54"/>
        <end position="126"/>
    </location>
</feature>
<feature type="domain" description="F-box">
    <location>
        <begin position="220"/>
        <end position="268"/>
    </location>
</feature>
<feature type="repeat" description="Kelch 1">
    <location>
        <begin position="380"/>
        <end position="430"/>
    </location>
</feature>
<feature type="repeat" description="Kelch 2">
    <location>
        <begin position="432"/>
        <end position="483"/>
    </location>
</feature>
<feature type="repeat" description="Kelch 3">
    <location>
        <begin position="485"/>
        <end position="537"/>
    </location>
</feature>
<feature type="repeat" description="Kelch 4">
    <location>
        <begin position="545"/>
        <end position="597"/>
    </location>
</feature>
<feature type="repeat" description="Kelch 5">
    <location>
        <begin position="599"/>
        <end position="629"/>
    </location>
</feature>
<feature type="modified residue" description="S-4a-FMN cysteine" evidence="1">
    <location>
        <position position="102"/>
    </location>
</feature>
<feature type="sequence conflict" description="In Ref. 5; AK100677." evidence="3" ref="5">
    <original>L</original>
    <variation>LA</variation>
    <location>
        <position position="51"/>
    </location>
</feature>
<feature type="sequence conflict" description="In Ref. 5; AK100677." evidence="3" ref="5">
    <original>V</original>
    <variation>A</variation>
    <location>
        <position position="68"/>
    </location>
</feature>
<feature type="sequence conflict" description="In Ref. 5; AK100677." evidence="3" ref="5">
    <original>C</original>
    <variation>W</variation>
    <location>
        <position position="130"/>
    </location>
</feature>
<feature type="sequence conflict" description="In Ref. 5; AK100677." evidence="3" ref="5">
    <original>N</original>
    <variation>S</variation>
    <location>
        <position position="153"/>
    </location>
</feature>
<proteinExistence type="evidence at transcript level"/>
<evidence type="ECO:0000250" key="1"/>
<evidence type="ECO:0000255" key="2">
    <source>
        <dbReference type="PROSITE-ProRule" id="PRU00140"/>
    </source>
</evidence>
<evidence type="ECO:0000305" key="3"/>
<dbReference type="EMBL" id="DP000010">
    <property type="protein sequence ID" value="ABA94231.2"/>
    <property type="molecule type" value="Genomic_DNA"/>
</dbReference>
<dbReference type="EMBL" id="AP008217">
    <property type="protein sequence ID" value="BAF28431.2"/>
    <property type="molecule type" value="Genomic_DNA"/>
</dbReference>
<dbReference type="EMBL" id="AP014967">
    <property type="protein sequence ID" value="BAT14389.1"/>
    <property type="molecule type" value="Genomic_DNA"/>
</dbReference>
<dbReference type="EMBL" id="AK100677">
    <property type="status" value="NOT_ANNOTATED_CDS"/>
    <property type="molecule type" value="mRNA"/>
</dbReference>
<dbReference type="RefSeq" id="XP_015617056.1">
    <property type="nucleotide sequence ID" value="XM_015761570.1"/>
</dbReference>
<dbReference type="SMR" id="Q2R2W1"/>
<dbReference type="FunCoup" id="Q2R2W1">
    <property type="interactions" value="26"/>
</dbReference>
<dbReference type="STRING" id="39947.Q2R2W1"/>
<dbReference type="PaxDb" id="39947-Q2R2W1"/>
<dbReference type="EnsemblPlants" id="Os11t0547000-01">
    <property type="protein sequence ID" value="Os11t0547000-01"/>
    <property type="gene ID" value="Os11g0547000"/>
</dbReference>
<dbReference type="Gramene" id="Os11t0547000-01">
    <property type="protein sequence ID" value="Os11t0547000-01"/>
    <property type="gene ID" value="Os11g0547000"/>
</dbReference>
<dbReference type="KEGG" id="dosa:Os11g0547000"/>
<dbReference type="eggNOG" id="ENOG502QWBU">
    <property type="taxonomic scope" value="Eukaryota"/>
</dbReference>
<dbReference type="InParanoid" id="Q2R2W1"/>
<dbReference type="OMA" id="AVCWRKF"/>
<dbReference type="OrthoDB" id="447251at2759"/>
<dbReference type="PlantReactome" id="R-OSA-8933811">
    <property type="pathway name" value="Circadian rhythm"/>
</dbReference>
<dbReference type="UniPathway" id="UPA00143"/>
<dbReference type="Proteomes" id="UP000000763">
    <property type="component" value="Chromosome 11"/>
</dbReference>
<dbReference type="Proteomes" id="UP000059680">
    <property type="component" value="Chromosome 11"/>
</dbReference>
<dbReference type="ExpressionAtlas" id="Q2R2W1">
    <property type="expression patterns" value="baseline and differential"/>
</dbReference>
<dbReference type="GO" id="GO:0005829">
    <property type="term" value="C:cytosol"/>
    <property type="evidence" value="ECO:0000318"/>
    <property type="project" value="GO_Central"/>
</dbReference>
<dbReference type="GO" id="GO:0005634">
    <property type="term" value="C:nucleus"/>
    <property type="evidence" value="ECO:0000318"/>
    <property type="project" value="GO_Central"/>
</dbReference>
<dbReference type="GO" id="GO:0019005">
    <property type="term" value="C:SCF ubiquitin ligase complex"/>
    <property type="evidence" value="ECO:0000318"/>
    <property type="project" value="GO_Central"/>
</dbReference>
<dbReference type="GO" id="GO:0009881">
    <property type="term" value="F:photoreceptor activity"/>
    <property type="evidence" value="ECO:0007669"/>
    <property type="project" value="UniProtKB-KW"/>
</dbReference>
<dbReference type="GO" id="GO:0007623">
    <property type="term" value="P:circadian rhythm"/>
    <property type="evidence" value="ECO:0000318"/>
    <property type="project" value="GO_Central"/>
</dbReference>
<dbReference type="GO" id="GO:2001007">
    <property type="term" value="P:negative regulation of cellulose biosynthetic process"/>
    <property type="evidence" value="ECO:0007669"/>
    <property type="project" value="EnsemblPlants"/>
</dbReference>
<dbReference type="GO" id="GO:0009911">
    <property type="term" value="P:positive regulation of flower development"/>
    <property type="evidence" value="ECO:0007669"/>
    <property type="project" value="EnsemblPlants"/>
</dbReference>
<dbReference type="GO" id="GO:0016567">
    <property type="term" value="P:protein ubiquitination"/>
    <property type="evidence" value="ECO:0007669"/>
    <property type="project" value="UniProtKB-UniPathway"/>
</dbReference>
<dbReference type="GO" id="GO:0006355">
    <property type="term" value="P:regulation of DNA-templated transcription"/>
    <property type="evidence" value="ECO:0007669"/>
    <property type="project" value="EnsemblPlants"/>
</dbReference>
<dbReference type="GO" id="GO:0009637">
    <property type="term" value="P:response to blue light"/>
    <property type="evidence" value="ECO:0000318"/>
    <property type="project" value="GO_Central"/>
</dbReference>
<dbReference type="CDD" id="cd00130">
    <property type="entry name" value="PAS"/>
    <property type="match status" value="1"/>
</dbReference>
<dbReference type="FunFam" id="3.30.450.20:FF:000041">
    <property type="entry name" value="Adagio protein 1"/>
    <property type="match status" value="1"/>
</dbReference>
<dbReference type="FunFam" id="2.120.10.80:FF:000005">
    <property type="entry name" value="Putative LOV domain-containing protein"/>
    <property type="match status" value="1"/>
</dbReference>
<dbReference type="FunFam" id="2.120.10.80:FF:000026">
    <property type="entry name" value="Putative LOV domain-containing protein"/>
    <property type="match status" value="1"/>
</dbReference>
<dbReference type="Gene3D" id="1.20.1280.50">
    <property type="match status" value="1"/>
</dbReference>
<dbReference type="Gene3D" id="2.120.10.80">
    <property type="entry name" value="Kelch-type beta propeller"/>
    <property type="match status" value="2"/>
</dbReference>
<dbReference type="Gene3D" id="3.30.450.20">
    <property type="entry name" value="PAS domain"/>
    <property type="match status" value="1"/>
</dbReference>
<dbReference type="InterPro" id="IPR036047">
    <property type="entry name" value="F-box-like_dom_sf"/>
</dbReference>
<dbReference type="InterPro" id="IPR001810">
    <property type="entry name" value="F-box_dom"/>
</dbReference>
<dbReference type="InterPro" id="IPR011043">
    <property type="entry name" value="Gal_Oxase/kelch_b-propeller"/>
</dbReference>
<dbReference type="InterPro" id="IPR015915">
    <property type="entry name" value="Kelch-typ_b-propeller"/>
</dbReference>
<dbReference type="InterPro" id="IPR011498">
    <property type="entry name" value="Kelch_2"/>
</dbReference>
<dbReference type="InterPro" id="IPR000014">
    <property type="entry name" value="PAS"/>
</dbReference>
<dbReference type="InterPro" id="IPR035965">
    <property type="entry name" value="PAS-like_dom_sf"/>
</dbReference>
<dbReference type="NCBIfam" id="TIGR00229">
    <property type="entry name" value="sensory_box"/>
    <property type="match status" value="1"/>
</dbReference>
<dbReference type="PANTHER" id="PTHR46175:SF2">
    <property type="entry name" value="ADAGIO PROTEIN 3"/>
    <property type="match status" value="1"/>
</dbReference>
<dbReference type="PANTHER" id="PTHR46175">
    <property type="entry name" value="BACTERIOOPSIN TRANSCRIPTIONAL ACTIVATOR"/>
    <property type="match status" value="1"/>
</dbReference>
<dbReference type="Pfam" id="PF12937">
    <property type="entry name" value="F-box-like"/>
    <property type="match status" value="1"/>
</dbReference>
<dbReference type="Pfam" id="PF07646">
    <property type="entry name" value="Kelch_2"/>
    <property type="match status" value="1"/>
</dbReference>
<dbReference type="Pfam" id="PF24681">
    <property type="entry name" value="Kelch_KLHDC2_KLHL20_DRC7"/>
    <property type="match status" value="1"/>
</dbReference>
<dbReference type="Pfam" id="PF13426">
    <property type="entry name" value="PAS_9"/>
    <property type="match status" value="1"/>
</dbReference>
<dbReference type="SUPFAM" id="SSF81383">
    <property type="entry name" value="F-box domain"/>
    <property type="match status" value="1"/>
</dbReference>
<dbReference type="SUPFAM" id="SSF50965">
    <property type="entry name" value="Galactose oxidase, central domain"/>
    <property type="match status" value="1"/>
</dbReference>
<dbReference type="SUPFAM" id="SSF55785">
    <property type="entry name" value="PYP-like sensor domain (PAS domain)"/>
    <property type="match status" value="1"/>
</dbReference>
<dbReference type="PROSITE" id="PS50112">
    <property type="entry name" value="PAS"/>
    <property type="match status" value="1"/>
</dbReference>
<keyword id="KW-0090">Biological rhythms</keyword>
<keyword id="KW-0157">Chromophore</keyword>
<keyword id="KW-0285">Flavoprotein</keyword>
<keyword id="KW-0288">FMN</keyword>
<keyword id="KW-0880">Kelch repeat</keyword>
<keyword id="KW-0539">Nucleus</keyword>
<keyword id="KW-0600">Photoreceptor protein</keyword>
<keyword id="KW-0675">Receptor</keyword>
<keyword id="KW-1185">Reference proteome</keyword>
<keyword id="KW-0677">Repeat</keyword>
<keyword id="KW-0716">Sensory transduction</keyword>
<keyword id="KW-0833">Ubl conjugation pathway</keyword>
<sequence>MFDAGDRGGGGGVVAVKRMKLCEEEEEEEEGMEVDEEEEEVGWVWRPPGGLAGEDEAAAWEGRAAAIVVSDAVEVDFPVIYVNAAFEAATGYRADEVLGRNCRFLQFRDPRAQRRHPLVDPMVVSEIRRCLNEGIEFQGELLNFRKDGAPLYNRLRLIPMHGDDGFVTHVIGIQLFSEANIDLSNVSYPVYKQQSNHRPNIQEINPASHEHIPKIQSSEYCCILQLSDEVLAHNILSRLSPRDVASIGSVCTRMHELTKNDHLRKMVCQNAWGRDVTVRLEMSTKMLGWGRLARELTTLEAASWRKFTVGGRVEPSRCNFSACAVGNRLVLFGGEGVNMQPMDDTFVLNLESAKPEWRRVKVSASPPGRWGHTLSWLNGSWLVVFGGCGQQGLLNDVFVLDLDAKQPTWREVASEGPPLPRSWHSSCTLDGSKLVVSGGCTESGVLLSDTFLLDLTKEKPAWKEIPTSWSPPSRLGHTLSVFGKTKLFMFGGLAKSGSLRLRSCDAYTMDAGEDSPQWRQLATTGFPSIGPPPRLDHVAVSLPCGRIIIFGGSIAGLHSPSQLFLLDPAEEKPTWRILNVPGQPPKFAWGHSTCVVGGTRVLVLGGHTGEEWILNELHELCLASRPDEDE</sequence>
<gene>
    <name type="ordered locus">Os11g0547000</name>
    <name type="ordered locus">LOC_Os11g34460</name>
</gene>
<reference key="1">
    <citation type="journal article" date="2005" name="BMC Biol.">
        <title>The sequence of rice chromosomes 11 and 12, rich in disease resistance genes and recent gene duplications.</title>
        <authorList>
            <consortium name="The rice chromosomes 11 and 12 sequencing consortia"/>
        </authorList>
    </citation>
    <scope>NUCLEOTIDE SEQUENCE [LARGE SCALE GENOMIC DNA]</scope>
    <source>
        <strain>cv. Nipponbare</strain>
    </source>
</reference>
<reference key="2">
    <citation type="journal article" date="2005" name="Nature">
        <title>The map-based sequence of the rice genome.</title>
        <authorList>
            <consortium name="International rice genome sequencing project (IRGSP)"/>
        </authorList>
    </citation>
    <scope>NUCLEOTIDE SEQUENCE [LARGE SCALE GENOMIC DNA]</scope>
    <source>
        <strain>cv. Nipponbare</strain>
    </source>
</reference>
<reference key="3">
    <citation type="journal article" date="2008" name="Nucleic Acids Res.">
        <title>The rice annotation project database (RAP-DB): 2008 update.</title>
        <authorList>
            <consortium name="The rice annotation project (RAP)"/>
        </authorList>
    </citation>
    <scope>GENOME REANNOTATION</scope>
    <source>
        <strain>cv. Nipponbare</strain>
    </source>
</reference>
<reference key="4">
    <citation type="journal article" date="2013" name="Rice">
        <title>Improvement of the Oryza sativa Nipponbare reference genome using next generation sequence and optical map data.</title>
        <authorList>
            <person name="Kawahara Y."/>
            <person name="de la Bastide M."/>
            <person name="Hamilton J.P."/>
            <person name="Kanamori H."/>
            <person name="McCombie W.R."/>
            <person name="Ouyang S."/>
            <person name="Schwartz D.C."/>
            <person name="Tanaka T."/>
            <person name="Wu J."/>
            <person name="Zhou S."/>
            <person name="Childs K.L."/>
            <person name="Davidson R.M."/>
            <person name="Lin H."/>
            <person name="Quesada-Ocampo L."/>
            <person name="Vaillancourt B."/>
            <person name="Sakai H."/>
            <person name="Lee S.S."/>
            <person name="Kim J."/>
            <person name="Numa H."/>
            <person name="Itoh T."/>
            <person name="Buell C.R."/>
            <person name="Matsumoto T."/>
        </authorList>
    </citation>
    <scope>GENOME REANNOTATION</scope>
    <source>
        <strain>cv. Nipponbare</strain>
    </source>
</reference>
<reference key="5">
    <citation type="journal article" date="2003" name="Science">
        <title>Collection, mapping, and annotation of over 28,000 cDNA clones from japonica rice.</title>
        <authorList>
            <consortium name="The rice full-length cDNA consortium"/>
        </authorList>
    </citation>
    <scope>NUCLEOTIDE SEQUENCE [LARGE SCALE MRNA]</scope>
    <source>
        <strain>cv. Nipponbare</strain>
    </source>
</reference>
<organism>
    <name type="scientific">Oryza sativa subsp. japonica</name>
    <name type="common">Rice</name>
    <dbReference type="NCBI Taxonomy" id="39947"/>
    <lineage>
        <taxon>Eukaryota</taxon>
        <taxon>Viridiplantae</taxon>
        <taxon>Streptophyta</taxon>
        <taxon>Embryophyta</taxon>
        <taxon>Tracheophyta</taxon>
        <taxon>Spermatophyta</taxon>
        <taxon>Magnoliopsida</taxon>
        <taxon>Liliopsida</taxon>
        <taxon>Poales</taxon>
        <taxon>Poaceae</taxon>
        <taxon>BOP clade</taxon>
        <taxon>Oryzoideae</taxon>
        <taxon>Oryzeae</taxon>
        <taxon>Oryzinae</taxon>
        <taxon>Oryza</taxon>
        <taxon>Oryza sativa</taxon>
    </lineage>
</organism>
<name>ADO3_ORYSJ</name>